<reference key="1">
    <citation type="journal article" date="2009" name="BMC Genomics">
        <title>Metabolic analysis of the soil microbe Dechloromonas aromatica str. RCB: indications of a surprisingly complex life-style and cryptic anaerobic pathways for aromatic degradation.</title>
        <authorList>
            <person name="Salinero K.K."/>
            <person name="Keller K."/>
            <person name="Feil W.S."/>
            <person name="Feil H."/>
            <person name="Trong S."/>
            <person name="Di Bartolo G."/>
            <person name="Lapidus A."/>
        </authorList>
    </citation>
    <scope>NUCLEOTIDE SEQUENCE [LARGE SCALE GENOMIC DNA]</scope>
    <source>
        <strain>RCB</strain>
    </source>
</reference>
<proteinExistence type="inferred from homology"/>
<keyword id="KW-0030">Aminoacyl-tRNA synthetase</keyword>
<keyword id="KW-0067">ATP-binding</keyword>
<keyword id="KW-0963">Cytoplasm</keyword>
<keyword id="KW-0436">Ligase</keyword>
<keyword id="KW-0479">Metal-binding</keyword>
<keyword id="KW-0547">Nucleotide-binding</keyword>
<keyword id="KW-0648">Protein biosynthesis</keyword>
<keyword id="KW-0862">Zinc</keyword>
<gene>
    <name evidence="1" type="primary">ileS</name>
    <name type="ordered locus">Daro_3046</name>
</gene>
<protein>
    <recommendedName>
        <fullName evidence="1">Isoleucine--tRNA ligase</fullName>
        <ecNumber evidence="1">6.1.1.5</ecNumber>
    </recommendedName>
    <alternativeName>
        <fullName evidence="1">Isoleucyl-tRNA synthetase</fullName>
        <shortName evidence="1">IleRS</shortName>
    </alternativeName>
</protein>
<feature type="chain" id="PRO_0000098378" description="Isoleucine--tRNA ligase">
    <location>
        <begin position="1"/>
        <end position="932"/>
    </location>
</feature>
<feature type="short sequence motif" description="'HIGH' region">
    <location>
        <begin position="58"/>
        <end position="68"/>
    </location>
</feature>
<feature type="short sequence motif" description="'KMSKS' region">
    <location>
        <begin position="611"/>
        <end position="615"/>
    </location>
</feature>
<feature type="binding site" evidence="1">
    <location>
        <position position="570"/>
    </location>
    <ligand>
        <name>L-isoleucyl-5'-AMP</name>
        <dbReference type="ChEBI" id="CHEBI:178002"/>
    </ligand>
</feature>
<feature type="binding site" evidence="1">
    <location>
        <position position="614"/>
    </location>
    <ligand>
        <name>ATP</name>
        <dbReference type="ChEBI" id="CHEBI:30616"/>
    </ligand>
</feature>
<feature type="binding site" evidence="1">
    <location>
        <position position="895"/>
    </location>
    <ligand>
        <name>Zn(2+)</name>
        <dbReference type="ChEBI" id="CHEBI:29105"/>
    </ligand>
</feature>
<feature type="binding site" evidence="1">
    <location>
        <position position="898"/>
    </location>
    <ligand>
        <name>Zn(2+)</name>
        <dbReference type="ChEBI" id="CHEBI:29105"/>
    </ligand>
</feature>
<feature type="binding site" evidence="1">
    <location>
        <position position="915"/>
    </location>
    <ligand>
        <name>Zn(2+)</name>
        <dbReference type="ChEBI" id="CHEBI:29105"/>
    </ligand>
</feature>
<feature type="binding site" evidence="1">
    <location>
        <position position="918"/>
    </location>
    <ligand>
        <name>Zn(2+)</name>
        <dbReference type="ChEBI" id="CHEBI:29105"/>
    </ligand>
</feature>
<organism>
    <name type="scientific">Dechloromonas aromatica (strain RCB)</name>
    <dbReference type="NCBI Taxonomy" id="159087"/>
    <lineage>
        <taxon>Bacteria</taxon>
        <taxon>Pseudomonadati</taxon>
        <taxon>Pseudomonadota</taxon>
        <taxon>Betaproteobacteria</taxon>
        <taxon>Rhodocyclales</taxon>
        <taxon>Azonexaceae</taxon>
        <taxon>Dechloromonas</taxon>
    </lineage>
</organism>
<sequence>MADYKDSLNLPDTAFPMRGDLPKREPQWVAQWQEKKLYQRIREICAGRPRFTLHDGPPYANGDIHIGHAVNKVLKDIIVRSKTLSGFDAPYVPGWDCHGLPIEHQIEKLHGKAIPADKVRELSRAYAAEQVERQKKDFIRLGVLGDWGNPYLTMNFSAEAGEIRALGKILEQGYLYQGLKPVNWCLDCGSALAEAEVEYEDKNSPAIDVAFEVHENHTAKLAAAFGLTHLRGPAFAVIWTTTPWTLPANEAVSVHPDLTYDLIETEKGALILVRELAEAALKRYGLEGTVAGSCTGDKLDQMLLKHPFQNRDVAIICGTHVTTEAGTGLVHTAPAHGVDDYNIGKKYGLPVNNPVGNDGKFISTTPALSVGELAGKTVWEANPQVLQELEARARLLKNERIQHSYPHCWRHKTPIIFRATTQWFIGMENKKNEDASTLRWIAERAVDETQFFPAWGRARLEGMMKTRPDWCVSRQRNWGVPIPFFLHKETGQPHPRTAELIEQVALRVEKSGIEAWFSLDAAELLGAEADQYVKMKDTLDVWFDSGTTHWHVMRGSHAADHTYPADLYLEGSDQHRGWFQSSLLSGCAIDGRAPYKGLLTHGFVVDGKGHKMSKSKGNVIAPQQVSDKMGADILRLWTASTDYSGELTISDEILKRVVEGYRRIRNTLRFLLANVSDFDAATDMLPIDQWLEIDRYALALTRELQDGCRADFDKYEFHRVVQALQTFCSEDLGGFYLDILKDRLYTTAPKSVARRSAQSALWHITQAFVRLLAPITAFTAEEVWQVLTGKADDSVMFQVWHDLPALAGEGDLLAKWALIRTARADVTKALEAQREAGKIGSALQAAVEIHCGGEKYEALASLGDDLKFVFICSSTVAVRDDNEQVIATPLEHAKCERCWHVREDVGANTEHPTLCGRCVSNLYGEGEVRGCA</sequence>
<name>SYI_DECAR</name>
<comment type="function">
    <text evidence="1">Catalyzes the attachment of isoleucine to tRNA(Ile). As IleRS can inadvertently accommodate and process structurally similar amino acids such as valine, to avoid such errors it has two additional distinct tRNA(Ile)-dependent editing activities. One activity is designated as 'pretransfer' editing and involves the hydrolysis of activated Val-AMP. The other activity is designated 'posttransfer' editing and involves deacylation of mischarged Val-tRNA(Ile).</text>
</comment>
<comment type="catalytic activity">
    <reaction evidence="1">
        <text>tRNA(Ile) + L-isoleucine + ATP = L-isoleucyl-tRNA(Ile) + AMP + diphosphate</text>
        <dbReference type="Rhea" id="RHEA:11060"/>
        <dbReference type="Rhea" id="RHEA-COMP:9666"/>
        <dbReference type="Rhea" id="RHEA-COMP:9695"/>
        <dbReference type="ChEBI" id="CHEBI:30616"/>
        <dbReference type="ChEBI" id="CHEBI:33019"/>
        <dbReference type="ChEBI" id="CHEBI:58045"/>
        <dbReference type="ChEBI" id="CHEBI:78442"/>
        <dbReference type="ChEBI" id="CHEBI:78528"/>
        <dbReference type="ChEBI" id="CHEBI:456215"/>
        <dbReference type="EC" id="6.1.1.5"/>
    </reaction>
</comment>
<comment type="cofactor">
    <cofactor evidence="1">
        <name>Zn(2+)</name>
        <dbReference type="ChEBI" id="CHEBI:29105"/>
    </cofactor>
    <text evidence="1">Binds 1 zinc ion per subunit.</text>
</comment>
<comment type="subunit">
    <text evidence="1">Monomer.</text>
</comment>
<comment type="subcellular location">
    <subcellularLocation>
        <location evidence="1">Cytoplasm</location>
    </subcellularLocation>
</comment>
<comment type="domain">
    <text evidence="1">IleRS has two distinct active sites: one for aminoacylation and one for editing. The misactivated valine is translocated from the active site to the editing site, which sterically excludes the correctly activated isoleucine. The single editing site contains two valyl binding pockets, one specific for each substrate (Val-AMP or Val-tRNA(Ile)).</text>
</comment>
<comment type="similarity">
    <text evidence="1">Belongs to the class-I aminoacyl-tRNA synthetase family. IleS type 1 subfamily.</text>
</comment>
<accession>Q47BK5</accession>
<dbReference type="EC" id="6.1.1.5" evidence="1"/>
<dbReference type="EMBL" id="CP000089">
    <property type="protein sequence ID" value="AAZ47776.1"/>
    <property type="molecule type" value="Genomic_DNA"/>
</dbReference>
<dbReference type="SMR" id="Q47BK5"/>
<dbReference type="STRING" id="159087.Daro_3046"/>
<dbReference type="KEGG" id="dar:Daro_3046"/>
<dbReference type="eggNOG" id="COG0060">
    <property type="taxonomic scope" value="Bacteria"/>
</dbReference>
<dbReference type="HOGENOM" id="CLU_001493_7_1_4"/>
<dbReference type="OrthoDB" id="9810365at2"/>
<dbReference type="GO" id="GO:0005829">
    <property type="term" value="C:cytosol"/>
    <property type="evidence" value="ECO:0007669"/>
    <property type="project" value="TreeGrafter"/>
</dbReference>
<dbReference type="GO" id="GO:0002161">
    <property type="term" value="F:aminoacyl-tRNA deacylase activity"/>
    <property type="evidence" value="ECO:0007669"/>
    <property type="project" value="InterPro"/>
</dbReference>
<dbReference type="GO" id="GO:0005524">
    <property type="term" value="F:ATP binding"/>
    <property type="evidence" value="ECO:0007669"/>
    <property type="project" value="UniProtKB-UniRule"/>
</dbReference>
<dbReference type="GO" id="GO:0004822">
    <property type="term" value="F:isoleucine-tRNA ligase activity"/>
    <property type="evidence" value="ECO:0007669"/>
    <property type="project" value="UniProtKB-UniRule"/>
</dbReference>
<dbReference type="GO" id="GO:0000049">
    <property type="term" value="F:tRNA binding"/>
    <property type="evidence" value="ECO:0007669"/>
    <property type="project" value="InterPro"/>
</dbReference>
<dbReference type="GO" id="GO:0008270">
    <property type="term" value="F:zinc ion binding"/>
    <property type="evidence" value="ECO:0007669"/>
    <property type="project" value="UniProtKB-UniRule"/>
</dbReference>
<dbReference type="GO" id="GO:0006428">
    <property type="term" value="P:isoleucyl-tRNA aminoacylation"/>
    <property type="evidence" value="ECO:0007669"/>
    <property type="project" value="UniProtKB-UniRule"/>
</dbReference>
<dbReference type="CDD" id="cd07960">
    <property type="entry name" value="Anticodon_Ia_Ile_BEm"/>
    <property type="match status" value="1"/>
</dbReference>
<dbReference type="CDD" id="cd00818">
    <property type="entry name" value="IleRS_core"/>
    <property type="match status" value="1"/>
</dbReference>
<dbReference type="FunFam" id="3.40.50.620:FF:000042">
    <property type="entry name" value="Isoleucine--tRNA ligase"/>
    <property type="match status" value="1"/>
</dbReference>
<dbReference type="FunFam" id="3.40.50.620:FF:000048">
    <property type="entry name" value="Isoleucine--tRNA ligase"/>
    <property type="match status" value="1"/>
</dbReference>
<dbReference type="Gene3D" id="1.10.730.20">
    <property type="match status" value="1"/>
</dbReference>
<dbReference type="Gene3D" id="3.40.50.620">
    <property type="entry name" value="HUPs"/>
    <property type="match status" value="2"/>
</dbReference>
<dbReference type="Gene3D" id="1.10.10.830">
    <property type="entry name" value="Ile-tRNA synthetase CP2 domain-like"/>
    <property type="match status" value="1"/>
</dbReference>
<dbReference type="Gene3D" id="3.90.740.10">
    <property type="entry name" value="Valyl/Leucyl/Isoleucyl-tRNA synthetase, editing domain"/>
    <property type="match status" value="1"/>
</dbReference>
<dbReference type="HAMAP" id="MF_02002">
    <property type="entry name" value="Ile_tRNA_synth_type1"/>
    <property type="match status" value="1"/>
</dbReference>
<dbReference type="InterPro" id="IPR001412">
    <property type="entry name" value="aa-tRNA-synth_I_CS"/>
</dbReference>
<dbReference type="InterPro" id="IPR002300">
    <property type="entry name" value="aa-tRNA-synth_Ia"/>
</dbReference>
<dbReference type="InterPro" id="IPR033708">
    <property type="entry name" value="Anticodon_Ile_BEm"/>
</dbReference>
<dbReference type="InterPro" id="IPR002301">
    <property type="entry name" value="Ile-tRNA-ligase"/>
</dbReference>
<dbReference type="InterPro" id="IPR023585">
    <property type="entry name" value="Ile-tRNA-ligase_type1"/>
</dbReference>
<dbReference type="InterPro" id="IPR050081">
    <property type="entry name" value="Ile-tRNA_ligase"/>
</dbReference>
<dbReference type="InterPro" id="IPR013155">
    <property type="entry name" value="M/V/L/I-tRNA-synth_anticd-bd"/>
</dbReference>
<dbReference type="InterPro" id="IPR014729">
    <property type="entry name" value="Rossmann-like_a/b/a_fold"/>
</dbReference>
<dbReference type="InterPro" id="IPR009080">
    <property type="entry name" value="tRNAsynth_Ia_anticodon-bd"/>
</dbReference>
<dbReference type="InterPro" id="IPR009008">
    <property type="entry name" value="Val/Leu/Ile-tRNA-synth_edit"/>
</dbReference>
<dbReference type="InterPro" id="IPR010663">
    <property type="entry name" value="Znf_FPG/IleRS"/>
</dbReference>
<dbReference type="NCBIfam" id="TIGR00392">
    <property type="entry name" value="ileS"/>
    <property type="match status" value="1"/>
</dbReference>
<dbReference type="PANTHER" id="PTHR42765:SF1">
    <property type="entry name" value="ISOLEUCINE--TRNA LIGASE, MITOCHONDRIAL"/>
    <property type="match status" value="1"/>
</dbReference>
<dbReference type="PANTHER" id="PTHR42765">
    <property type="entry name" value="SOLEUCYL-TRNA SYNTHETASE"/>
    <property type="match status" value="1"/>
</dbReference>
<dbReference type="Pfam" id="PF08264">
    <property type="entry name" value="Anticodon_1"/>
    <property type="match status" value="1"/>
</dbReference>
<dbReference type="Pfam" id="PF00133">
    <property type="entry name" value="tRNA-synt_1"/>
    <property type="match status" value="1"/>
</dbReference>
<dbReference type="Pfam" id="PF06827">
    <property type="entry name" value="zf-FPG_IleRS"/>
    <property type="match status" value="1"/>
</dbReference>
<dbReference type="PRINTS" id="PR00984">
    <property type="entry name" value="TRNASYNTHILE"/>
</dbReference>
<dbReference type="SUPFAM" id="SSF47323">
    <property type="entry name" value="Anticodon-binding domain of a subclass of class I aminoacyl-tRNA synthetases"/>
    <property type="match status" value="1"/>
</dbReference>
<dbReference type="SUPFAM" id="SSF52374">
    <property type="entry name" value="Nucleotidylyl transferase"/>
    <property type="match status" value="1"/>
</dbReference>
<dbReference type="SUPFAM" id="SSF50677">
    <property type="entry name" value="ValRS/IleRS/LeuRS editing domain"/>
    <property type="match status" value="1"/>
</dbReference>
<dbReference type="PROSITE" id="PS00178">
    <property type="entry name" value="AA_TRNA_LIGASE_I"/>
    <property type="match status" value="1"/>
</dbReference>
<evidence type="ECO:0000255" key="1">
    <source>
        <dbReference type="HAMAP-Rule" id="MF_02002"/>
    </source>
</evidence>